<reference key="1">
    <citation type="journal article" date="2002" name="Nature">
        <title>Complete genome sequence of the model actinomycete Streptomyces coelicolor A3(2).</title>
        <authorList>
            <person name="Bentley S.D."/>
            <person name="Chater K.F."/>
            <person name="Cerdeno-Tarraga A.-M."/>
            <person name="Challis G.L."/>
            <person name="Thomson N.R."/>
            <person name="James K.D."/>
            <person name="Harris D.E."/>
            <person name="Quail M.A."/>
            <person name="Kieser H."/>
            <person name="Harper D."/>
            <person name="Bateman A."/>
            <person name="Brown S."/>
            <person name="Chandra G."/>
            <person name="Chen C.W."/>
            <person name="Collins M."/>
            <person name="Cronin A."/>
            <person name="Fraser A."/>
            <person name="Goble A."/>
            <person name="Hidalgo J."/>
            <person name="Hornsby T."/>
            <person name="Howarth S."/>
            <person name="Huang C.-H."/>
            <person name="Kieser T."/>
            <person name="Larke L."/>
            <person name="Murphy L.D."/>
            <person name="Oliver K."/>
            <person name="O'Neil S."/>
            <person name="Rabbinowitsch E."/>
            <person name="Rajandream M.A."/>
            <person name="Rutherford K.M."/>
            <person name="Rutter S."/>
            <person name="Seeger K."/>
            <person name="Saunders D."/>
            <person name="Sharp S."/>
            <person name="Squares R."/>
            <person name="Squares S."/>
            <person name="Taylor K."/>
            <person name="Warren T."/>
            <person name="Wietzorrek A."/>
            <person name="Woodward J.R."/>
            <person name="Barrell B.G."/>
            <person name="Parkhill J."/>
            <person name="Hopwood D.A."/>
        </authorList>
    </citation>
    <scope>NUCLEOTIDE SEQUENCE [LARGE SCALE GENOMIC DNA]</scope>
    <source>
        <strain>ATCC BAA-471 / A3(2) / M145</strain>
    </source>
</reference>
<feature type="chain" id="PRO_0000046145" description="Potassium-transporting ATPase ATP-binding subunit">
    <location>
        <begin position="1"/>
        <end position="707"/>
    </location>
</feature>
<feature type="transmembrane region" description="Helical" evidence="1">
    <location>
        <begin position="61"/>
        <end position="81"/>
    </location>
</feature>
<feature type="transmembrane region" description="Helical" evidence="1">
    <location>
        <begin position="89"/>
        <end position="109"/>
    </location>
</feature>
<feature type="transmembrane region" description="Helical" evidence="1">
    <location>
        <begin position="238"/>
        <end position="258"/>
    </location>
</feature>
<feature type="transmembrane region" description="Helical" evidence="1">
    <location>
        <begin position="271"/>
        <end position="291"/>
    </location>
</feature>
<feature type="transmembrane region" description="Helical" evidence="1">
    <location>
        <begin position="612"/>
        <end position="632"/>
    </location>
</feature>
<feature type="transmembrane region" description="Helical" evidence="1">
    <location>
        <begin position="640"/>
        <end position="660"/>
    </location>
</feature>
<feature type="transmembrane region" description="Helical" evidence="1">
    <location>
        <begin position="683"/>
        <end position="703"/>
    </location>
</feature>
<feature type="region of interest" description="Disordered" evidence="2">
    <location>
        <begin position="1"/>
        <end position="37"/>
    </location>
</feature>
<feature type="compositionally biased region" description="Basic and acidic residues" evidence="2">
    <location>
        <begin position="1"/>
        <end position="11"/>
    </location>
</feature>
<feature type="active site" description="4-aspartylphosphate intermediate" evidence="1">
    <location>
        <position position="326"/>
    </location>
</feature>
<feature type="binding site" evidence="1">
    <location>
        <position position="363"/>
    </location>
    <ligand>
        <name>ATP</name>
        <dbReference type="ChEBI" id="CHEBI:30616"/>
    </ligand>
</feature>
<feature type="binding site" evidence="1">
    <location>
        <position position="367"/>
    </location>
    <ligand>
        <name>ATP</name>
        <dbReference type="ChEBI" id="CHEBI:30616"/>
    </ligand>
</feature>
<feature type="binding site" evidence="1">
    <location>
        <begin position="397"/>
        <end position="404"/>
    </location>
    <ligand>
        <name>ATP</name>
        <dbReference type="ChEBI" id="CHEBI:30616"/>
    </ligand>
</feature>
<feature type="binding site" evidence="1">
    <location>
        <position position="415"/>
    </location>
    <ligand>
        <name>ATP</name>
        <dbReference type="ChEBI" id="CHEBI:30616"/>
    </ligand>
</feature>
<feature type="binding site" evidence="1">
    <location>
        <position position="542"/>
    </location>
    <ligand>
        <name>Mg(2+)</name>
        <dbReference type="ChEBI" id="CHEBI:18420"/>
    </ligand>
</feature>
<feature type="binding site" evidence="1">
    <location>
        <position position="546"/>
    </location>
    <ligand>
        <name>Mg(2+)</name>
        <dbReference type="ChEBI" id="CHEBI:18420"/>
    </ligand>
</feature>
<accession>Q9X8Z9</accession>
<protein>
    <recommendedName>
        <fullName evidence="1">Potassium-transporting ATPase ATP-binding subunit</fullName>
        <ecNumber evidence="1">7.2.2.6</ecNumber>
    </recommendedName>
    <alternativeName>
        <fullName evidence="1">ATP phosphohydrolase [potassium-transporting] B chain</fullName>
    </alternativeName>
    <alternativeName>
        <fullName evidence="1">Potassium-binding and translocating subunit B</fullName>
    </alternativeName>
    <alternativeName>
        <fullName evidence="1">Potassium-translocating ATPase B chain</fullName>
    </alternativeName>
</protein>
<sequence length="707" mass="74161">MNTDTQKHEDAMSTTTPARAPHDDAPSGQQPGQGRVGAGLFEPKQLVKSLPDAFRKLDPRVMAKSPVMFVVLVGSVLTTAFSVTEPGDWFGWTISAWLWLTVLFANLAEAVAEGRGKAQADTLRRAKTDTVARRADGTTVPGTGLTVGDLVVCEAGDVIPGDGDVVEGVASVDESAITGESAPVIRESGGDRSAVTGGTKVLSDRIVVRITTKPGETFIDRMINLVEGAARQKTPNEIALNILLASLTVVFLLACATLPPFADYAGTHLDMIVLVALLVCLIPTTIGALLSAIGIAGMDRLVQRNVLAMSGRAVEAAGDVSTLLLDKTGTITLGNRQAAEFVPVRGVTEAELADAAQLSSLADETPEGRSIVVLAKEKYGLRERHQGELVGAEWIGFTAQTRMSGVDADGRKVRKGAAGSVVAWVRERGGSGTEDADTAVERISAAGGTPLLVAVEDERGARVLGVVHLKDVVKQGMRERFDELRRMGIRTVMITGDNPLTAKAIADEAGVDDYLAEATPEDKMALIKREQAGGKLVAMTGDGTNDAPALAQADVGVAMNTGTSAAKEAGNMVDLDSNPTKLIEIVEIGKQLLITRGALTTFSIANDVAKYFAIIPALFAAVYPGLDKLNIMGLSSPDSAILSAVVFNALIILVLVPLALKGVRYRPTSADRMLRRNLGVYGLGGLVAPFIGIKLIDLIVSLIPGIG</sequence>
<keyword id="KW-0067">ATP-binding</keyword>
<keyword id="KW-1003">Cell membrane</keyword>
<keyword id="KW-0406">Ion transport</keyword>
<keyword id="KW-0460">Magnesium</keyword>
<keyword id="KW-0472">Membrane</keyword>
<keyword id="KW-0479">Metal-binding</keyword>
<keyword id="KW-0547">Nucleotide-binding</keyword>
<keyword id="KW-0597">Phosphoprotein</keyword>
<keyword id="KW-0630">Potassium</keyword>
<keyword id="KW-0633">Potassium transport</keyword>
<keyword id="KW-1185">Reference proteome</keyword>
<keyword id="KW-1278">Translocase</keyword>
<keyword id="KW-0812">Transmembrane</keyword>
<keyword id="KW-1133">Transmembrane helix</keyword>
<keyword id="KW-0813">Transport</keyword>
<name>KDPB_STRCO</name>
<organism>
    <name type="scientific">Streptomyces coelicolor (strain ATCC BAA-471 / A3(2) / M145)</name>
    <dbReference type="NCBI Taxonomy" id="100226"/>
    <lineage>
        <taxon>Bacteria</taxon>
        <taxon>Bacillati</taxon>
        <taxon>Actinomycetota</taxon>
        <taxon>Actinomycetes</taxon>
        <taxon>Kitasatosporales</taxon>
        <taxon>Streptomycetaceae</taxon>
        <taxon>Streptomyces</taxon>
        <taxon>Streptomyces albidoflavus group</taxon>
    </lineage>
</organism>
<gene>
    <name evidence="1" type="primary">kdpB</name>
    <name type="ordered locus">SCO3717</name>
    <name type="ORF">SCH35.07</name>
</gene>
<evidence type="ECO:0000255" key="1">
    <source>
        <dbReference type="HAMAP-Rule" id="MF_00285"/>
    </source>
</evidence>
<evidence type="ECO:0000256" key="2">
    <source>
        <dbReference type="SAM" id="MobiDB-lite"/>
    </source>
</evidence>
<proteinExistence type="inferred from homology"/>
<dbReference type="EC" id="7.2.2.6" evidence="1"/>
<dbReference type="EMBL" id="AL939117">
    <property type="protein sequence ID" value="CAB44420.1"/>
    <property type="molecule type" value="Genomic_DNA"/>
</dbReference>
<dbReference type="PIR" id="T36652">
    <property type="entry name" value="T36652"/>
</dbReference>
<dbReference type="RefSeq" id="NP_627909.1">
    <property type="nucleotide sequence ID" value="NC_003888.3"/>
</dbReference>
<dbReference type="RefSeq" id="WP_011029187.1">
    <property type="nucleotide sequence ID" value="NZ_VNID01000003.1"/>
</dbReference>
<dbReference type="SMR" id="Q9X8Z9"/>
<dbReference type="FunCoup" id="Q9X8Z9">
    <property type="interactions" value="60"/>
</dbReference>
<dbReference type="STRING" id="100226.gene:17761341"/>
<dbReference type="PaxDb" id="100226-SCO3717"/>
<dbReference type="KEGG" id="sco:SCO3717"/>
<dbReference type="PATRIC" id="fig|100226.15.peg.3778"/>
<dbReference type="eggNOG" id="COG2216">
    <property type="taxonomic scope" value="Bacteria"/>
</dbReference>
<dbReference type="HOGENOM" id="CLU_025728_2_0_11"/>
<dbReference type="InParanoid" id="Q9X8Z9"/>
<dbReference type="OrthoDB" id="9814270at2"/>
<dbReference type="PhylomeDB" id="Q9X8Z9"/>
<dbReference type="Proteomes" id="UP000001973">
    <property type="component" value="Chromosome"/>
</dbReference>
<dbReference type="GO" id="GO:0005886">
    <property type="term" value="C:plasma membrane"/>
    <property type="evidence" value="ECO:0000318"/>
    <property type="project" value="GO_Central"/>
</dbReference>
<dbReference type="GO" id="GO:0031004">
    <property type="term" value="C:potassium ion-transporting ATPase complex"/>
    <property type="evidence" value="ECO:0000318"/>
    <property type="project" value="GO_Central"/>
</dbReference>
<dbReference type="GO" id="GO:1903103">
    <property type="term" value="C:potassium:proton antiporter complex"/>
    <property type="evidence" value="ECO:0000318"/>
    <property type="project" value="GO_Central"/>
</dbReference>
<dbReference type="GO" id="GO:0005524">
    <property type="term" value="F:ATP binding"/>
    <property type="evidence" value="ECO:0007669"/>
    <property type="project" value="UniProtKB-UniRule"/>
</dbReference>
<dbReference type="GO" id="GO:0016887">
    <property type="term" value="F:ATP hydrolysis activity"/>
    <property type="evidence" value="ECO:0007669"/>
    <property type="project" value="InterPro"/>
</dbReference>
<dbReference type="GO" id="GO:0000287">
    <property type="term" value="F:magnesium ion binding"/>
    <property type="evidence" value="ECO:0007669"/>
    <property type="project" value="UniProtKB-UniRule"/>
</dbReference>
<dbReference type="GO" id="GO:0008556">
    <property type="term" value="F:P-type potassium transmembrane transporter activity"/>
    <property type="evidence" value="ECO:0000318"/>
    <property type="project" value="GO_Central"/>
</dbReference>
<dbReference type="GO" id="GO:0071805">
    <property type="term" value="P:potassium ion transmembrane transport"/>
    <property type="evidence" value="ECO:0000318"/>
    <property type="project" value="GO_Central"/>
</dbReference>
<dbReference type="CDD" id="cd02078">
    <property type="entry name" value="P-type_ATPase_K"/>
    <property type="match status" value="1"/>
</dbReference>
<dbReference type="FunFam" id="2.70.150.10:FF:000033">
    <property type="entry name" value="Potassium-transporting ATPase ATP-binding subunit"/>
    <property type="match status" value="1"/>
</dbReference>
<dbReference type="FunFam" id="3.40.1110.10:FF:000007">
    <property type="entry name" value="Potassium-transporting ATPase ATP-binding subunit"/>
    <property type="match status" value="1"/>
</dbReference>
<dbReference type="Gene3D" id="3.40.1110.10">
    <property type="entry name" value="Calcium-transporting ATPase, cytoplasmic domain N"/>
    <property type="match status" value="1"/>
</dbReference>
<dbReference type="Gene3D" id="2.70.150.10">
    <property type="entry name" value="Calcium-transporting ATPase, cytoplasmic transduction domain A"/>
    <property type="match status" value="1"/>
</dbReference>
<dbReference type="Gene3D" id="3.40.50.1000">
    <property type="entry name" value="HAD superfamily/HAD-like"/>
    <property type="match status" value="1"/>
</dbReference>
<dbReference type="HAMAP" id="MF_00285">
    <property type="entry name" value="KdpB"/>
    <property type="match status" value="1"/>
</dbReference>
<dbReference type="InterPro" id="IPR023299">
    <property type="entry name" value="ATPase_P-typ_cyto_dom_N"/>
</dbReference>
<dbReference type="InterPro" id="IPR018303">
    <property type="entry name" value="ATPase_P-typ_P_site"/>
</dbReference>
<dbReference type="InterPro" id="IPR023298">
    <property type="entry name" value="ATPase_P-typ_TM_dom_sf"/>
</dbReference>
<dbReference type="InterPro" id="IPR008250">
    <property type="entry name" value="ATPase_P-typ_transduc_dom_A_sf"/>
</dbReference>
<dbReference type="InterPro" id="IPR036412">
    <property type="entry name" value="HAD-like_sf"/>
</dbReference>
<dbReference type="InterPro" id="IPR023214">
    <property type="entry name" value="HAD_sf"/>
</dbReference>
<dbReference type="InterPro" id="IPR006391">
    <property type="entry name" value="P-type_ATPase_bsu_IA"/>
</dbReference>
<dbReference type="InterPro" id="IPR001757">
    <property type="entry name" value="P_typ_ATPase"/>
</dbReference>
<dbReference type="InterPro" id="IPR044492">
    <property type="entry name" value="P_typ_ATPase_HD_dom"/>
</dbReference>
<dbReference type="NCBIfam" id="TIGR01494">
    <property type="entry name" value="ATPase_P-type"/>
    <property type="match status" value="2"/>
</dbReference>
<dbReference type="NCBIfam" id="TIGR01497">
    <property type="entry name" value="kdpB"/>
    <property type="match status" value="1"/>
</dbReference>
<dbReference type="PANTHER" id="PTHR43743">
    <property type="entry name" value="POTASSIUM-TRANSPORTING ATPASE ATP-BINDING SUBUNIT"/>
    <property type="match status" value="1"/>
</dbReference>
<dbReference type="PANTHER" id="PTHR43743:SF1">
    <property type="entry name" value="POTASSIUM-TRANSPORTING ATPASE ATP-BINDING SUBUNIT"/>
    <property type="match status" value="1"/>
</dbReference>
<dbReference type="Pfam" id="PF00122">
    <property type="entry name" value="E1-E2_ATPase"/>
    <property type="match status" value="1"/>
</dbReference>
<dbReference type="Pfam" id="PF00702">
    <property type="entry name" value="Hydrolase"/>
    <property type="match status" value="1"/>
</dbReference>
<dbReference type="PRINTS" id="PR00119">
    <property type="entry name" value="CATATPASE"/>
</dbReference>
<dbReference type="SFLD" id="SFLDG00002">
    <property type="entry name" value="C1.7:_P-type_atpase_like"/>
    <property type="match status" value="1"/>
</dbReference>
<dbReference type="SFLD" id="SFLDF00027">
    <property type="entry name" value="p-type_atpase"/>
    <property type="match status" value="1"/>
</dbReference>
<dbReference type="SUPFAM" id="SSF81653">
    <property type="entry name" value="Calcium ATPase, transduction domain A"/>
    <property type="match status" value="1"/>
</dbReference>
<dbReference type="SUPFAM" id="SSF81665">
    <property type="entry name" value="Calcium ATPase, transmembrane domain M"/>
    <property type="match status" value="1"/>
</dbReference>
<dbReference type="SUPFAM" id="SSF56784">
    <property type="entry name" value="HAD-like"/>
    <property type="match status" value="1"/>
</dbReference>
<dbReference type="PROSITE" id="PS00154">
    <property type="entry name" value="ATPASE_E1_E2"/>
    <property type="match status" value="1"/>
</dbReference>
<comment type="function">
    <text evidence="1">Part of the high-affinity ATP-driven potassium transport (or Kdp) system, which catalyzes the hydrolysis of ATP coupled with the electrogenic transport of potassium into the cytoplasm. This subunit is responsible for energy coupling to the transport system and for the release of the potassium ions to the cytoplasm.</text>
</comment>
<comment type="catalytic activity">
    <reaction evidence="1">
        <text>K(+)(out) + ATP + H2O = K(+)(in) + ADP + phosphate + H(+)</text>
        <dbReference type="Rhea" id="RHEA:16777"/>
        <dbReference type="ChEBI" id="CHEBI:15377"/>
        <dbReference type="ChEBI" id="CHEBI:15378"/>
        <dbReference type="ChEBI" id="CHEBI:29103"/>
        <dbReference type="ChEBI" id="CHEBI:30616"/>
        <dbReference type="ChEBI" id="CHEBI:43474"/>
        <dbReference type="ChEBI" id="CHEBI:456216"/>
        <dbReference type="EC" id="7.2.2.6"/>
    </reaction>
    <physiologicalReaction direction="left-to-right" evidence="1">
        <dbReference type="Rhea" id="RHEA:16778"/>
    </physiologicalReaction>
</comment>
<comment type="subunit">
    <text evidence="1">The system is composed of three essential subunits: KdpA, KdpB and KdpC.</text>
</comment>
<comment type="subcellular location">
    <subcellularLocation>
        <location evidence="1">Cell membrane</location>
        <topology evidence="1">Multi-pass membrane protein</topology>
    </subcellularLocation>
</comment>
<comment type="similarity">
    <text evidence="1">Belongs to the cation transport ATPase (P-type) (TC 3.A.3) family. Type IA subfamily.</text>
</comment>